<proteinExistence type="inferred from homology"/>
<gene>
    <name evidence="1" type="primary">pckG</name>
    <name type="ordered locus">ACICU_02913</name>
</gene>
<keyword id="KW-0963">Cytoplasm</keyword>
<keyword id="KW-0210">Decarboxylase</keyword>
<keyword id="KW-0312">Gluconeogenesis</keyword>
<keyword id="KW-0342">GTP-binding</keyword>
<keyword id="KW-0456">Lyase</keyword>
<keyword id="KW-0464">Manganese</keyword>
<keyword id="KW-0479">Metal-binding</keyword>
<keyword id="KW-0547">Nucleotide-binding</keyword>
<comment type="function">
    <text evidence="1">Catalyzes the conversion of oxaloacetate (OAA) to phosphoenolpyruvate (PEP), the rate-limiting step in the metabolic pathway that produces glucose from lactate and other precursors derived from the citric acid cycle.</text>
</comment>
<comment type="catalytic activity">
    <reaction evidence="1">
        <text>oxaloacetate + GTP = phosphoenolpyruvate + GDP + CO2</text>
        <dbReference type="Rhea" id="RHEA:10388"/>
        <dbReference type="ChEBI" id="CHEBI:16452"/>
        <dbReference type="ChEBI" id="CHEBI:16526"/>
        <dbReference type="ChEBI" id="CHEBI:37565"/>
        <dbReference type="ChEBI" id="CHEBI:58189"/>
        <dbReference type="ChEBI" id="CHEBI:58702"/>
        <dbReference type="EC" id="4.1.1.32"/>
    </reaction>
</comment>
<comment type="cofactor">
    <cofactor evidence="1">
        <name>Mn(2+)</name>
        <dbReference type="ChEBI" id="CHEBI:29035"/>
    </cofactor>
    <text evidence="1">Binds 1 Mn(2+) ion per subunit.</text>
</comment>
<comment type="pathway">
    <text evidence="1">Carbohydrate biosynthesis; gluconeogenesis.</text>
</comment>
<comment type="subunit">
    <text evidence="1">Monomer.</text>
</comment>
<comment type="subcellular location">
    <subcellularLocation>
        <location evidence="1">Cytoplasm</location>
    </subcellularLocation>
</comment>
<comment type="similarity">
    <text evidence="1">Belongs to the phosphoenolpyruvate carboxykinase [GTP] family.</text>
</comment>
<dbReference type="EC" id="4.1.1.32" evidence="1"/>
<dbReference type="EMBL" id="CP000863">
    <property type="protein sequence ID" value="ACC58225.1"/>
    <property type="molecule type" value="Genomic_DNA"/>
</dbReference>
<dbReference type="RefSeq" id="WP_000214355.1">
    <property type="nucleotide sequence ID" value="NZ_CP031380.1"/>
</dbReference>
<dbReference type="SMR" id="B2HXC1"/>
<dbReference type="KEGG" id="abc:ACICU_02913"/>
<dbReference type="HOGENOM" id="CLU_028872_1_1_6"/>
<dbReference type="UniPathway" id="UPA00138"/>
<dbReference type="Proteomes" id="UP000008839">
    <property type="component" value="Chromosome"/>
</dbReference>
<dbReference type="GO" id="GO:0005829">
    <property type="term" value="C:cytosol"/>
    <property type="evidence" value="ECO:0007669"/>
    <property type="project" value="TreeGrafter"/>
</dbReference>
<dbReference type="GO" id="GO:0005525">
    <property type="term" value="F:GTP binding"/>
    <property type="evidence" value="ECO:0007669"/>
    <property type="project" value="UniProtKB-UniRule"/>
</dbReference>
<dbReference type="GO" id="GO:0030145">
    <property type="term" value="F:manganese ion binding"/>
    <property type="evidence" value="ECO:0007669"/>
    <property type="project" value="UniProtKB-UniRule"/>
</dbReference>
<dbReference type="GO" id="GO:0004613">
    <property type="term" value="F:phosphoenolpyruvate carboxykinase (GTP) activity"/>
    <property type="evidence" value="ECO:0007669"/>
    <property type="project" value="UniProtKB-UniRule"/>
</dbReference>
<dbReference type="GO" id="GO:0071333">
    <property type="term" value="P:cellular response to glucose stimulus"/>
    <property type="evidence" value="ECO:0007669"/>
    <property type="project" value="TreeGrafter"/>
</dbReference>
<dbReference type="GO" id="GO:0006094">
    <property type="term" value="P:gluconeogenesis"/>
    <property type="evidence" value="ECO:0007669"/>
    <property type="project" value="UniProtKB-UniRule"/>
</dbReference>
<dbReference type="GO" id="GO:0046327">
    <property type="term" value="P:glycerol biosynthetic process from pyruvate"/>
    <property type="evidence" value="ECO:0007669"/>
    <property type="project" value="TreeGrafter"/>
</dbReference>
<dbReference type="GO" id="GO:0006107">
    <property type="term" value="P:oxaloacetate metabolic process"/>
    <property type="evidence" value="ECO:0007669"/>
    <property type="project" value="TreeGrafter"/>
</dbReference>
<dbReference type="GO" id="GO:0019543">
    <property type="term" value="P:propionate catabolic process"/>
    <property type="evidence" value="ECO:0007669"/>
    <property type="project" value="TreeGrafter"/>
</dbReference>
<dbReference type="GO" id="GO:0033993">
    <property type="term" value="P:response to lipid"/>
    <property type="evidence" value="ECO:0007669"/>
    <property type="project" value="TreeGrafter"/>
</dbReference>
<dbReference type="GO" id="GO:0042594">
    <property type="term" value="P:response to starvation"/>
    <property type="evidence" value="ECO:0007669"/>
    <property type="project" value="TreeGrafter"/>
</dbReference>
<dbReference type="CDD" id="cd00819">
    <property type="entry name" value="PEPCK_GTP"/>
    <property type="match status" value="1"/>
</dbReference>
<dbReference type="FunFam" id="3.40.449.10:FF:000005">
    <property type="entry name" value="Phosphoenolpyruvate carboxykinase [GTP]"/>
    <property type="match status" value="1"/>
</dbReference>
<dbReference type="Gene3D" id="3.90.228.20">
    <property type="match status" value="1"/>
</dbReference>
<dbReference type="Gene3D" id="3.40.449.10">
    <property type="entry name" value="Phosphoenolpyruvate Carboxykinase, domain 1"/>
    <property type="match status" value="1"/>
</dbReference>
<dbReference type="Gene3D" id="2.170.8.10">
    <property type="entry name" value="Phosphoenolpyruvate Carboxykinase, domain 2"/>
    <property type="match status" value="1"/>
</dbReference>
<dbReference type="HAMAP" id="MF_00452">
    <property type="entry name" value="PEPCK_GTP"/>
    <property type="match status" value="1"/>
</dbReference>
<dbReference type="InterPro" id="IPR018091">
    <property type="entry name" value="PEP_carboxykin_GTP_CS"/>
</dbReference>
<dbReference type="InterPro" id="IPR013035">
    <property type="entry name" value="PEP_carboxykinase_C"/>
</dbReference>
<dbReference type="InterPro" id="IPR008209">
    <property type="entry name" value="PEP_carboxykinase_GTP"/>
</dbReference>
<dbReference type="InterPro" id="IPR035077">
    <property type="entry name" value="PEP_carboxykinase_GTP_C"/>
</dbReference>
<dbReference type="InterPro" id="IPR035078">
    <property type="entry name" value="PEP_carboxykinase_GTP_N"/>
</dbReference>
<dbReference type="InterPro" id="IPR008210">
    <property type="entry name" value="PEP_carboxykinase_N"/>
</dbReference>
<dbReference type="NCBIfam" id="NF003253">
    <property type="entry name" value="PRK04210.1"/>
    <property type="match status" value="1"/>
</dbReference>
<dbReference type="PANTHER" id="PTHR11561">
    <property type="entry name" value="PHOSPHOENOLPYRUVATE CARBOXYKINASE"/>
    <property type="match status" value="1"/>
</dbReference>
<dbReference type="PANTHER" id="PTHR11561:SF0">
    <property type="entry name" value="PHOSPHOENOLPYRUVATE CARBOXYKINASE [GTP]-RELATED"/>
    <property type="match status" value="1"/>
</dbReference>
<dbReference type="Pfam" id="PF00821">
    <property type="entry name" value="PEPCK_GTP"/>
    <property type="match status" value="1"/>
</dbReference>
<dbReference type="Pfam" id="PF17297">
    <property type="entry name" value="PEPCK_N"/>
    <property type="match status" value="1"/>
</dbReference>
<dbReference type="PIRSF" id="PIRSF001348">
    <property type="entry name" value="PEP_carboxykinase_GTP"/>
    <property type="match status" value="1"/>
</dbReference>
<dbReference type="SUPFAM" id="SSF68923">
    <property type="entry name" value="PEP carboxykinase N-terminal domain"/>
    <property type="match status" value="1"/>
</dbReference>
<dbReference type="SUPFAM" id="SSF53795">
    <property type="entry name" value="PEP carboxykinase-like"/>
    <property type="match status" value="1"/>
</dbReference>
<dbReference type="PROSITE" id="PS00505">
    <property type="entry name" value="PEPCK_GTP"/>
    <property type="match status" value="1"/>
</dbReference>
<reference key="1">
    <citation type="journal article" date="2008" name="Antimicrob. Agents Chemother.">
        <title>Whole-genome pyrosequencing of an epidemic multidrug-resistant Acinetobacter baumannii strain belonging to the European clone II group.</title>
        <authorList>
            <person name="Iacono M."/>
            <person name="Villa L."/>
            <person name="Fortini D."/>
            <person name="Bordoni R."/>
            <person name="Imperi F."/>
            <person name="Bonnal R.J."/>
            <person name="Sicheritz-Ponten T."/>
            <person name="De Bellis G."/>
            <person name="Visca P."/>
            <person name="Cassone A."/>
            <person name="Carattoli A."/>
        </authorList>
    </citation>
    <scope>NUCLEOTIDE SEQUENCE [LARGE SCALE GENOMIC DNA]</scope>
    <source>
        <strain>ACICU</strain>
    </source>
</reference>
<accession>B2HXC1</accession>
<evidence type="ECO:0000255" key="1">
    <source>
        <dbReference type="HAMAP-Rule" id="MF_00452"/>
    </source>
</evidence>
<sequence>MTTVNAPEFVRHPKLIAWVEEIANLTKPAKIEWCDGSEEEYQRLIDLMIANGTMQKLNQEKHPGSYLANSDPSDVARVEDRTYICSQNKEDAGATNNWEDPAVMREKLNGLFEGSMKGRTMYVVPFSMGPLGSHIAHIGIELTDSPYVAVSMRKMARMGKAVYDVLGTDGEFVPCVHTVGAPLAEGQKDVAWPCNPEKYIVHYPETREIWSFGSGYGGNALLGKKCLALRIASVMGREQGWLAEHMLILGVTNPQGEKHYIAAAFPSACGKTNFAMLIPPAGYEGWKIETVGDDIAWIKPGEDGRLYAINPEAGFFGVAPGTNTKTNPNCMATLHKDVIYTNVAVTDDGQVWWEGLSKEVPANLTNWKGQPHVNGEKAAHPNARFTVAAGQCPSIDADWENPAGVPISAFIFGGRRADTVPLVSEAFDWVDGVYKAATMGSETTAAAVGQQGIVRRDPFAMLPFAGYNMADYFDHWLNLGAKVSEKAEASGNKLPKIFNVNWFRRDAEGNFVWPGFGQNMRVLEWIIDRCEGRANAVETPIGFVPTYEDLNWEGTEFTKEQFDLITNQDKDQWVTEIESHTELFNKLGERLPKALKERQAALLEAVKTGF</sequence>
<protein>
    <recommendedName>
        <fullName evidence="1">Phosphoenolpyruvate carboxykinase [GTP]</fullName>
        <shortName evidence="1">PEP carboxykinase</shortName>
        <shortName evidence="1">PEPCK</shortName>
        <ecNumber evidence="1">4.1.1.32</ecNumber>
    </recommendedName>
</protein>
<feature type="chain" id="PRO_1000125039" description="Phosphoenolpyruvate carboxykinase [GTP]">
    <location>
        <begin position="1"/>
        <end position="610"/>
    </location>
</feature>
<feature type="active site" evidence="1">
    <location>
        <position position="269"/>
    </location>
</feature>
<feature type="binding site" evidence="1">
    <location>
        <position position="77"/>
    </location>
    <ligand>
        <name>substrate</name>
    </ligand>
</feature>
<feature type="binding site" evidence="1">
    <location>
        <begin position="216"/>
        <end position="218"/>
    </location>
    <ligand>
        <name>substrate</name>
    </ligand>
</feature>
<feature type="binding site" evidence="1">
    <location>
        <position position="225"/>
    </location>
    <ligand>
        <name>Mn(2+)</name>
        <dbReference type="ChEBI" id="CHEBI:29035"/>
    </ligand>
</feature>
<feature type="binding site" evidence="1">
    <location>
        <position position="245"/>
    </location>
    <ligand>
        <name>Mn(2+)</name>
        <dbReference type="ChEBI" id="CHEBI:29035"/>
    </ligand>
</feature>
<feature type="binding site" evidence="1">
    <location>
        <position position="267"/>
    </location>
    <ligand>
        <name>substrate</name>
    </ligand>
</feature>
<feature type="binding site" evidence="1">
    <location>
        <begin position="268"/>
        <end position="273"/>
    </location>
    <ligand>
        <name>GTP</name>
        <dbReference type="ChEBI" id="CHEBI:37565"/>
    </ligand>
</feature>
<feature type="binding site" evidence="1">
    <location>
        <position position="294"/>
    </location>
    <ligand>
        <name>Mn(2+)</name>
        <dbReference type="ChEBI" id="CHEBI:29035"/>
    </ligand>
</feature>
<feature type="binding site" evidence="1">
    <location>
        <begin position="382"/>
        <end position="384"/>
    </location>
    <ligand>
        <name>substrate</name>
    </ligand>
</feature>
<feature type="binding site" evidence="1">
    <location>
        <position position="384"/>
    </location>
    <ligand>
        <name>GTP</name>
        <dbReference type="ChEBI" id="CHEBI:37565"/>
    </ligand>
</feature>
<feature type="binding site" evidence="1">
    <location>
        <position position="415"/>
    </location>
    <ligand>
        <name>GTP</name>
        <dbReference type="ChEBI" id="CHEBI:37565"/>
    </ligand>
</feature>
<feature type="binding site" evidence="1">
    <location>
        <begin position="516"/>
        <end position="519"/>
    </location>
    <ligand>
        <name>GTP</name>
        <dbReference type="ChEBI" id="CHEBI:37565"/>
    </ligand>
</feature>
<organism>
    <name type="scientific">Acinetobacter baumannii (strain ACICU)</name>
    <dbReference type="NCBI Taxonomy" id="405416"/>
    <lineage>
        <taxon>Bacteria</taxon>
        <taxon>Pseudomonadati</taxon>
        <taxon>Pseudomonadota</taxon>
        <taxon>Gammaproteobacteria</taxon>
        <taxon>Moraxellales</taxon>
        <taxon>Moraxellaceae</taxon>
        <taxon>Acinetobacter</taxon>
        <taxon>Acinetobacter calcoaceticus/baumannii complex</taxon>
    </lineage>
</organism>
<name>PCKG_ACIBC</name>